<protein>
    <recommendedName>
        <fullName evidence="1">Ribosome maturation factor RimP</fullName>
    </recommendedName>
</protein>
<dbReference type="EMBL" id="CP001173">
    <property type="protein sequence ID" value="ACI27147.1"/>
    <property type="status" value="ALT_INIT"/>
    <property type="molecule type" value="Genomic_DNA"/>
</dbReference>
<dbReference type="RefSeq" id="WP_000162237.1">
    <property type="nucleotide sequence ID" value="NC_011333.1"/>
</dbReference>
<dbReference type="SMR" id="B5Z6E8"/>
<dbReference type="KEGG" id="hpg:HPG27_382"/>
<dbReference type="HOGENOM" id="CLU_070525_2_2_7"/>
<dbReference type="Proteomes" id="UP000001735">
    <property type="component" value="Chromosome"/>
</dbReference>
<dbReference type="GO" id="GO:0005829">
    <property type="term" value="C:cytosol"/>
    <property type="evidence" value="ECO:0007669"/>
    <property type="project" value="TreeGrafter"/>
</dbReference>
<dbReference type="GO" id="GO:0000028">
    <property type="term" value="P:ribosomal small subunit assembly"/>
    <property type="evidence" value="ECO:0007669"/>
    <property type="project" value="TreeGrafter"/>
</dbReference>
<dbReference type="GO" id="GO:0006412">
    <property type="term" value="P:translation"/>
    <property type="evidence" value="ECO:0007669"/>
    <property type="project" value="TreeGrafter"/>
</dbReference>
<dbReference type="CDD" id="cd01734">
    <property type="entry name" value="YlxS_C"/>
    <property type="match status" value="1"/>
</dbReference>
<dbReference type="FunFam" id="3.30.300.70:FF:000005">
    <property type="entry name" value="Ribosome maturation factor RimP"/>
    <property type="match status" value="1"/>
</dbReference>
<dbReference type="Gene3D" id="3.30.300.70">
    <property type="entry name" value="RimP-like superfamily, N-terminal"/>
    <property type="match status" value="1"/>
</dbReference>
<dbReference type="HAMAP" id="MF_01077">
    <property type="entry name" value="RimP"/>
    <property type="match status" value="1"/>
</dbReference>
<dbReference type="InterPro" id="IPR003728">
    <property type="entry name" value="Ribosome_maturation_RimP"/>
</dbReference>
<dbReference type="InterPro" id="IPR028998">
    <property type="entry name" value="RimP_C"/>
</dbReference>
<dbReference type="InterPro" id="IPR028989">
    <property type="entry name" value="RimP_N"/>
</dbReference>
<dbReference type="InterPro" id="IPR035956">
    <property type="entry name" value="RimP_N_sf"/>
</dbReference>
<dbReference type="PANTHER" id="PTHR33867">
    <property type="entry name" value="RIBOSOME MATURATION FACTOR RIMP"/>
    <property type="match status" value="1"/>
</dbReference>
<dbReference type="PANTHER" id="PTHR33867:SF1">
    <property type="entry name" value="RIBOSOME MATURATION FACTOR RIMP"/>
    <property type="match status" value="1"/>
</dbReference>
<dbReference type="Pfam" id="PF17384">
    <property type="entry name" value="DUF150_C"/>
    <property type="match status" value="1"/>
</dbReference>
<dbReference type="Pfam" id="PF02576">
    <property type="entry name" value="RimP_N"/>
    <property type="match status" value="1"/>
</dbReference>
<dbReference type="SUPFAM" id="SSF75420">
    <property type="entry name" value="YhbC-like, N-terminal domain"/>
    <property type="match status" value="1"/>
</dbReference>
<sequence length="146" mass="16629">MTKKIEEKIEGVIESLGYLLYDVSLVKENEQHILRVSLKNPNGAVSLDICQQVSEIISPLLDVCDFIQDAYILEVSSMGLERTLKTPKHFKLSLGEKVEVKLTNKESFQAVLKDANDLSADFELEDHAIKSVEYKDLKKVKTLFEW</sequence>
<name>RIMP_HELPG</name>
<accession>B5Z6E8</accession>
<feature type="chain" id="PRO_0000384681" description="Ribosome maturation factor RimP">
    <location>
        <begin position="1"/>
        <end position="146"/>
    </location>
</feature>
<proteinExistence type="inferred from homology"/>
<evidence type="ECO:0000255" key="1">
    <source>
        <dbReference type="HAMAP-Rule" id="MF_01077"/>
    </source>
</evidence>
<evidence type="ECO:0000305" key="2"/>
<keyword id="KW-0963">Cytoplasm</keyword>
<keyword id="KW-1185">Reference proteome</keyword>
<keyword id="KW-0690">Ribosome biogenesis</keyword>
<reference key="1">
    <citation type="journal article" date="2009" name="J. Bacteriol.">
        <title>The complete genome sequence of Helicobacter pylori strain G27.</title>
        <authorList>
            <person name="Baltrus D.A."/>
            <person name="Amieva M.R."/>
            <person name="Covacci A."/>
            <person name="Lowe T.M."/>
            <person name="Merrell D.S."/>
            <person name="Ottemann K.M."/>
            <person name="Stein M."/>
            <person name="Salama N.R."/>
            <person name="Guillemin K."/>
        </authorList>
    </citation>
    <scope>NUCLEOTIDE SEQUENCE [LARGE SCALE GENOMIC DNA]</scope>
    <source>
        <strain>G27</strain>
    </source>
</reference>
<organism>
    <name type="scientific">Helicobacter pylori (strain G27)</name>
    <dbReference type="NCBI Taxonomy" id="563041"/>
    <lineage>
        <taxon>Bacteria</taxon>
        <taxon>Pseudomonadati</taxon>
        <taxon>Campylobacterota</taxon>
        <taxon>Epsilonproteobacteria</taxon>
        <taxon>Campylobacterales</taxon>
        <taxon>Helicobacteraceae</taxon>
        <taxon>Helicobacter</taxon>
    </lineage>
</organism>
<comment type="function">
    <text evidence="1">Required for maturation of 30S ribosomal subunits.</text>
</comment>
<comment type="subcellular location">
    <subcellularLocation>
        <location evidence="1">Cytoplasm</location>
    </subcellularLocation>
</comment>
<comment type="similarity">
    <text evidence="1">Belongs to the RimP family.</text>
</comment>
<comment type="sequence caution" evidence="2">
    <conflict type="erroneous initiation">
        <sequence resource="EMBL-CDS" id="ACI27147"/>
    </conflict>
</comment>
<gene>
    <name evidence="1" type="primary">rimP</name>
    <name type="ordered locus">HPG27_382</name>
</gene>